<name>SECY2_STAES</name>
<sequence length="399" mass="45929">MFKKFEYKILYKRIFFTCLILVIYIIGSNISIVSNENLRTHKDSFFKLAITNVGGDLHTLNIFSLGLGPWLSSMIILTLINHKSNDKVKTQTRRERHFKERALTLIISAAQGFYIIHSYINKHAIKDSNMLILLLVLITGTLLMVWLADQNTTYGISGPMPIVLMSLVKSIFNTHFPKLNSSASLITMIIVLLVLALFILFFIELTEYRIEYNDIMNISAKDIPSYLSWKLNPAGSISIMVSLSLFMLTNNIVNFIGRFIVNHNFETHVFNFTNPVGITIYLLLQMILGYFLSRLLINTKRKSKEFLKNGNYFEGIQPGQQTEKFLGSKARRICWFGSIVVAIVLAIPMYSALLVPHLLKEVYFTTQMIVFVYIGINIAETIRAYLYFDSYKQILNKYW</sequence>
<keyword id="KW-1003">Cell membrane</keyword>
<keyword id="KW-0472">Membrane</keyword>
<keyword id="KW-0653">Protein transport</keyword>
<keyword id="KW-0811">Translocation</keyword>
<keyword id="KW-0812">Transmembrane</keyword>
<keyword id="KW-1133">Transmembrane helix</keyword>
<keyword id="KW-0813">Transport</keyword>
<dbReference type="EMBL" id="AE015929">
    <property type="protein sequence ID" value="AAO05890.1"/>
    <property type="molecule type" value="Genomic_DNA"/>
</dbReference>
<dbReference type="RefSeq" id="NP_765803.1">
    <property type="nucleotide sequence ID" value="NC_004461.1"/>
</dbReference>
<dbReference type="RefSeq" id="WP_001831846.1">
    <property type="nucleotide sequence ID" value="NZ_WBME01000055.1"/>
</dbReference>
<dbReference type="SMR" id="Q8CMU8"/>
<dbReference type="GeneID" id="50017685"/>
<dbReference type="KEGG" id="sep:SE_2248"/>
<dbReference type="PATRIC" id="fig|176280.10.peg.2195"/>
<dbReference type="eggNOG" id="COG0201">
    <property type="taxonomic scope" value="Bacteria"/>
</dbReference>
<dbReference type="HOGENOM" id="CLU_030313_4_0_9"/>
<dbReference type="OrthoDB" id="2055747at2"/>
<dbReference type="Proteomes" id="UP000001411">
    <property type="component" value="Chromosome"/>
</dbReference>
<dbReference type="GO" id="GO:0005886">
    <property type="term" value="C:plasma membrane"/>
    <property type="evidence" value="ECO:0007669"/>
    <property type="project" value="UniProtKB-SubCell"/>
</dbReference>
<dbReference type="GO" id="GO:0065002">
    <property type="term" value="P:intracellular protein transmembrane transport"/>
    <property type="evidence" value="ECO:0007669"/>
    <property type="project" value="UniProtKB-UniRule"/>
</dbReference>
<dbReference type="GO" id="GO:0006605">
    <property type="term" value="P:protein targeting"/>
    <property type="evidence" value="ECO:0007669"/>
    <property type="project" value="UniProtKB-UniRule"/>
</dbReference>
<dbReference type="Gene3D" id="1.10.3370.10">
    <property type="entry name" value="SecY subunit domain"/>
    <property type="match status" value="1"/>
</dbReference>
<dbReference type="HAMAP" id="MF_01466">
    <property type="entry name" value="SecY2"/>
    <property type="match status" value="1"/>
</dbReference>
<dbReference type="InterPro" id="IPR002208">
    <property type="entry name" value="SecY/SEC61-alpha"/>
</dbReference>
<dbReference type="InterPro" id="IPR014269">
    <property type="entry name" value="SecY2"/>
</dbReference>
<dbReference type="InterPro" id="IPR023201">
    <property type="entry name" value="SecY_dom_sf"/>
</dbReference>
<dbReference type="NCBIfam" id="TIGR02920">
    <property type="entry name" value="acc_sec_Y2"/>
    <property type="match status" value="1"/>
</dbReference>
<dbReference type="NCBIfam" id="NF009082">
    <property type="entry name" value="PRK12417.1"/>
    <property type="match status" value="1"/>
</dbReference>
<dbReference type="Pfam" id="PF00344">
    <property type="entry name" value="SecY"/>
    <property type="match status" value="1"/>
</dbReference>
<dbReference type="PIRSF" id="PIRSF004557">
    <property type="entry name" value="SecY"/>
    <property type="match status" value="1"/>
</dbReference>
<dbReference type="PRINTS" id="PR00303">
    <property type="entry name" value="SECYTRNLCASE"/>
</dbReference>
<dbReference type="SUPFAM" id="SSF103491">
    <property type="entry name" value="Preprotein translocase SecY subunit"/>
    <property type="match status" value="1"/>
</dbReference>
<accession>Q8CMU8</accession>
<feature type="chain" id="PRO_0000414870" description="Accessory Sec system protein translocase subunit SecY2">
    <location>
        <begin position="1"/>
        <end position="399"/>
    </location>
</feature>
<feature type="transmembrane region" description="Helical" evidence="1">
    <location>
        <begin position="14"/>
        <end position="34"/>
    </location>
</feature>
<feature type="transmembrane region" description="Helical" evidence="1">
    <location>
        <begin position="60"/>
        <end position="80"/>
    </location>
</feature>
<feature type="transmembrane region" description="Helical" evidence="1">
    <location>
        <begin position="102"/>
        <end position="122"/>
    </location>
</feature>
<feature type="transmembrane region" description="Helical" evidence="1">
    <location>
        <begin position="128"/>
        <end position="148"/>
    </location>
</feature>
<feature type="transmembrane region" description="Helical" evidence="1">
    <location>
        <begin position="152"/>
        <end position="172"/>
    </location>
</feature>
<feature type="transmembrane region" description="Helical" evidence="1">
    <location>
        <begin position="183"/>
        <end position="203"/>
    </location>
</feature>
<feature type="transmembrane region" description="Helical" evidence="1">
    <location>
        <begin position="237"/>
        <end position="257"/>
    </location>
</feature>
<feature type="transmembrane region" description="Helical" evidence="1">
    <location>
        <begin position="272"/>
        <end position="292"/>
    </location>
</feature>
<feature type="transmembrane region" description="Helical" evidence="1">
    <location>
        <begin position="335"/>
        <end position="355"/>
    </location>
</feature>
<feature type="transmembrane region" description="Helical" evidence="1">
    <location>
        <begin position="362"/>
        <end position="382"/>
    </location>
</feature>
<proteinExistence type="inferred from homology"/>
<organism>
    <name type="scientific">Staphylococcus epidermidis (strain ATCC 12228 / FDA PCI 1200)</name>
    <dbReference type="NCBI Taxonomy" id="176280"/>
    <lineage>
        <taxon>Bacteria</taxon>
        <taxon>Bacillati</taxon>
        <taxon>Bacillota</taxon>
        <taxon>Bacilli</taxon>
        <taxon>Bacillales</taxon>
        <taxon>Staphylococcaceae</taxon>
        <taxon>Staphylococcus</taxon>
    </lineage>
</organism>
<gene>
    <name evidence="1" type="primary">secY2</name>
    <name type="ordered locus">SE_2248</name>
</gene>
<reference key="1">
    <citation type="journal article" date="2003" name="Mol. Microbiol.">
        <title>Genome-based analysis of virulence genes in a non-biofilm-forming Staphylococcus epidermidis strain (ATCC 12228).</title>
        <authorList>
            <person name="Zhang Y.-Q."/>
            <person name="Ren S.-X."/>
            <person name="Li H.-L."/>
            <person name="Wang Y.-X."/>
            <person name="Fu G."/>
            <person name="Yang J."/>
            <person name="Qin Z.-Q."/>
            <person name="Miao Y.-G."/>
            <person name="Wang W.-Y."/>
            <person name="Chen R.-S."/>
            <person name="Shen Y."/>
            <person name="Chen Z."/>
            <person name="Yuan Z.-H."/>
            <person name="Zhao G.-P."/>
            <person name="Qu D."/>
            <person name="Danchin A."/>
            <person name="Wen Y.-M."/>
        </authorList>
    </citation>
    <scope>NUCLEOTIDE SEQUENCE [LARGE SCALE GENOMIC DNA]</scope>
    <source>
        <strain>ATCC 12228 / FDA PCI 1200</strain>
    </source>
</reference>
<protein>
    <recommendedName>
        <fullName evidence="1">Accessory Sec system protein translocase subunit SecY2</fullName>
    </recommendedName>
</protein>
<evidence type="ECO:0000255" key="1">
    <source>
        <dbReference type="HAMAP-Rule" id="MF_01466"/>
    </source>
</evidence>
<comment type="function">
    <text evidence="1">Part of the accessory SecA2/SecY2 system specifically required for export of possible cell wall proteins. The central subunit of a protein translocation channel.</text>
</comment>
<comment type="subunit">
    <text evidence="1">Component of the accessory SecA2/SecY2 protein translocase complex required to export cell wall proteins. May form heterotrimers with SecE and SecG subunits.</text>
</comment>
<comment type="subcellular location">
    <subcellularLocation>
        <location evidence="1">Cell membrane</location>
        <topology evidence="1">Multi-pass membrane protein</topology>
    </subcellularLocation>
</comment>
<comment type="similarity">
    <text evidence="1">Belongs to the SecY/SEC61-alpha family. SecY2 subfamily.</text>
</comment>